<evidence type="ECO:0000250" key="1"/>
<evidence type="ECO:0000250" key="2">
    <source>
        <dbReference type="UniProtKB" id="P00157"/>
    </source>
</evidence>
<evidence type="ECO:0000255" key="3">
    <source>
        <dbReference type="PROSITE-ProRule" id="PRU00967"/>
    </source>
</evidence>
<evidence type="ECO:0000255" key="4">
    <source>
        <dbReference type="PROSITE-ProRule" id="PRU00968"/>
    </source>
</evidence>
<organism>
    <name type="scientific">Rhynchomys isarogensis</name>
    <name type="common">Isarog shrew rat</name>
    <dbReference type="NCBI Taxonomy" id="238000"/>
    <lineage>
        <taxon>Eukaryota</taxon>
        <taxon>Metazoa</taxon>
        <taxon>Chordata</taxon>
        <taxon>Craniata</taxon>
        <taxon>Vertebrata</taxon>
        <taxon>Euteleostomi</taxon>
        <taxon>Mammalia</taxon>
        <taxon>Eutheria</taxon>
        <taxon>Euarchontoglires</taxon>
        <taxon>Glires</taxon>
        <taxon>Rodentia</taxon>
        <taxon>Myomorpha</taxon>
        <taxon>Muroidea</taxon>
        <taxon>Muridae</taxon>
        <taxon>Murinae</taxon>
        <taxon>Rhynchomys</taxon>
    </lineage>
</organism>
<keyword id="KW-0249">Electron transport</keyword>
<keyword id="KW-0349">Heme</keyword>
<keyword id="KW-0408">Iron</keyword>
<keyword id="KW-0472">Membrane</keyword>
<keyword id="KW-0479">Metal-binding</keyword>
<keyword id="KW-0496">Mitochondrion</keyword>
<keyword id="KW-0999">Mitochondrion inner membrane</keyword>
<keyword id="KW-0679">Respiratory chain</keyword>
<keyword id="KW-0812">Transmembrane</keyword>
<keyword id="KW-1133">Transmembrane helix</keyword>
<keyword id="KW-0813">Transport</keyword>
<keyword id="KW-0830">Ubiquinone</keyword>
<reference key="1">
    <citation type="journal article" date="2003" name="Biol. J. Linn. Soc. Lond.">
        <title>Molecular phylogeny of the endemic Philippine rodent Apomys (Muridae) and the dynamics of diversification in an oceanic archipelago.</title>
        <authorList>
            <person name="Steppan S.J."/>
            <person name="Zawadzki C."/>
            <person name="Heaney L.R."/>
        </authorList>
    </citation>
    <scope>NUCLEOTIDE SEQUENCE [GENOMIC DNA]</scope>
</reference>
<gene>
    <name type="primary">MT-CYB</name>
    <name type="synonym">COB</name>
    <name type="synonym">CYTB</name>
    <name type="synonym">MTCYB</name>
</gene>
<sequence>MTNIRKTHPLIKIINHSFIDLPTPSNISSWWNFGSLLGLCLAIQIITGLFLAMHYTADTTTAFSSVAHICRDVNYGWLIRYLHANGASMFFICLFLHVGRGLYYGSYTLMETWNIGVLLLFTVMATAFMGYVLPWGQMSFWGATVITNLLSAIPYIGTTLVEWIWGGFSVDKATLTRFFAFHFILPFIITALVIVHLLFLHETGSNNPTGLNSNADKIPFHPYYTIKDLLGVILLILSTMSLVLFFPDLLSDPDNYTPANPLNTPPHIKPEWYFLFAYAILRSIPNKLGGVLALILSILVLALLPFLHTSKQRSLMFRPITQTLYWMLVANLLVLTWIGGQPVEHPFIIIGQLASISYFSIILILMPISGIIENKLLKWSL</sequence>
<name>CYB_RHYIS</name>
<geneLocation type="mitochondrion"/>
<dbReference type="EMBL" id="AY324462">
    <property type="protein sequence ID" value="AAP88707.2"/>
    <property type="molecule type" value="Genomic_DNA"/>
</dbReference>
<dbReference type="SMR" id="Q7YC74"/>
<dbReference type="GO" id="GO:0005743">
    <property type="term" value="C:mitochondrial inner membrane"/>
    <property type="evidence" value="ECO:0007669"/>
    <property type="project" value="UniProtKB-SubCell"/>
</dbReference>
<dbReference type="GO" id="GO:0045275">
    <property type="term" value="C:respiratory chain complex III"/>
    <property type="evidence" value="ECO:0007669"/>
    <property type="project" value="InterPro"/>
</dbReference>
<dbReference type="GO" id="GO:0046872">
    <property type="term" value="F:metal ion binding"/>
    <property type="evidence" value="ECO:0007669"/>
    <property type="project" value="UniProtKB-KW"/>
</dbReference>
<dbReference type="GO" id="GO:0008121">
    <property type="term" value="F:ubiquinol-cytochrome-c reductase activity"/>
    <property type="evidence" value="ECO:0007669"/>
    <property type="project" value="InterPro"/>
</dbReference>
<dbReference type="GO" id="GO:0006122">
    <property type="term" value="P:mitochondrial electron transport, ubiquinol to cytochrome c"/>
    <property type="evidence" value="ECO:0007669"/>
    <property type="project" value="TreeGrafter"/>
</dbReference>
<dbReference type="CDD" id="cd00290">
    <property type="entry name" value="cytochrome_b_C"/>
    <property type="match status" value="1"/>
</dbReference>
<dbReference type="CDD" id="cd00284">
    <property type="entry name" value="Cytochrome_b_N"/>
    <property type="match status" value="1"/>
</dbReference>
<dbReference type="FunFam" id="1.20.810.10:FF:000002">
    <property type="entry name" value="Cytochrome b"/>
    <property type="match status" value="1"/>
</dbReference>
<dbReference type="Gene3D" id="1.20.810.10">
    <property type="entry name" value="Cytochrome Bc1 Complex, Chain C"/>
    <property type="match status" value="1"/>
</dbReference>
<dbReference type="InterPro" id="IPR005798">
    <property type="entry name" value="Cyt_b/b6_C"/>
</dbReference>
<dbReference type="InterPro" id="IPR036150">
    <property type="entry name" value="Cyt_b/b6_C_sf"/>
</dbReference>
<dbReference type="InterPro" id="IPR005797">
    <property type="entry name" value="Cyt_b/b6_N"/>
</dbReference>
<dbReference type="InterPro" id="IPR027387">
    <property type="entry name" value="Cytb/b6-like_sf"/>
</dbReference>
<dbReference type="InterPro" id="IPR030689">
    <property type="entry name" value="Cytochrome_b"/>
</dbReference>
<dbReference type="InterPro" id="IPR048260">
    <property type="entry name" value="Cytochrome_b_C_euk/bac"/>
</dbReference>
<dbReference type="InterPro" id="IPR048259">
    <property type="entry name" value="Cytochrome_b_N_euk/bac"/>
</dbReference>
<dbReference type="InterPro" id="IPR016174">
    <property type="entry name" value="Di-haem_cyt_TM"/>
</dbReference>
<dbReference type="PANTHER" id="PTHR19271">
    <property type="entry name" value="CYTOCHROME B"/>
    <property type="match status" value="1"/>
</dbReference>
<dbReference type="PANTHER" id="PTHR19271:SF16">
    <property type="entry name" value="CYTOCHROME B"/>
    <property type="match status" value="1"/>
</dbReference>
<dbReference type="Pfam" id="PF00032">
    <property type="entry name" value="Cytochrom_B_C"/>
    <property type="match status" value="1"/>
</dbReference>
<dbReference type="Pfam" id="PF00033">
    <property type="entry name" value="Cytochrome_B"/>
    <property type="match status" value="1"/>
</dbReference>
<dbReference type="PIRSF" id="PIRSF038885">
    <property type="entry name" value="COB"/>
    <property type="match status" value="1"/>
</dbReference>
<dbReference type="SUPFAM" id="SSF81648">
    <property type="entry name" value="a domain/subunit of cytochrome bc1 complex (Ubiquinol-cytochrome c reductase)"/>
    <property type="match status" value="1"/>
</dbReference>
<dbReference type="SUPFAM" id="SSF81342">
    <property type="entry name" value="Transmembrane di-heme cytochromes"/>
    <property type="match status" value="1"/>
</dbReference>
<dbReference type="PROSITE" id="PS51003">
    <property type="entry name" value="CYTB_CTER"/>
    <property type="match status" value="1"/>
</dbReference>
<dbReference type="PROSITE" id="PS51002">
    <property type="entry name" value="CYTB_NTER"/>
    <property type="match status" value="1"/>
</dbReference>
<accession>Q7YC74</accession>
<protein>
    <recommendedName>
        <fullName>Cytochrome b</fullName>
    </recommendedName>
    <alternativeName>
        <fullName>Complex III subunit 3</fullName>
    </alternativeName>
    <alternativeName>
        <fullName>Complex III subunit III</fullName>
    </alternativeName>
    <alternativeName>
        <fullName>Cytochrome b-c1 complex subunit 3</fullName>
    </alternativeName>
    <alternativeName>
        <fullName>Ubiquinol-cytochrome-c reductase complex cytochrome b subunit</fullName>
    </alternativeName>
</protein>
<comment type="function">
    <text evidence="2">Component of the ubiquinol-cytochrome c reductase complex (complex III or cytochrome b-c1 complex) that is part of the mitochondrial respiratory chain. The b-c1 complex mediates electron transfer from ubiquinol to cytochrome c. Contributes to the generation of a proton gradient across the mitochondrial membrane that is then used for ATP synthesis.</text>
</comment>
<comment type="cofactor">
    <cofactor evidence="2">
        <name>heme b</name>
        <dbReference type="ChEBI" id="CHEBI:60344"/>
    </cofactor>
    <text evidence="2">Binds 2 heme b groups non-covalently.</text>
</comment>
<comment type="subunit">
    <text evidence="2">The cytochrome bc1 complex contains 11 subunits: 3 respiratory subunits (MT-CYB, CYC1 and UQCRFS1), 2 core proteins (UQCRC1 and UQCRC2) and 6 low-molecular weight proteins (UQCRH/QCR6, UQCRB/QCR7, UQCRQ/QCR8, UQCR10/QCR9, UQCR11/QCR10 and a cleavage product of UQCRFS1). This cytochrome bc1 complex then forms a dimer.</text>
</comment>
<comment type="subcellular location">
    <subcellularLocation>
        <location evidence="2">Mitochondrion inner membrane</location>
        <topology evidence="2">Multi-pass membrane protein</topology>
    </subcellularLocation>
</comment>
<comment type="miscellaneous">
    <text evidence="1">Heme 1 (or BL or b562) is low-potential and absorbs at about 562 nm, and heme 2 (or BH or b566) is high-potential and absorbs at about 566 nm.</text>
</comment>
<comment type="similarity">
    <text evidence="3 4">Belongs to the cytochrome b family.</text>
</comment>
<comment type="caution">
    <text evidence="2">The full-length protein contains only eight transmembrane helices, not nine as predicted by bioinformatics tools.</text>
</comment>
<proteinExistence type="inferred from homology"/>
<feature type="chain" id="PRO_0000254966" description="Cytochrome b">
    <location>
        <begin position="1"/>
        <end position="381"/>
    </location>
</feature>
<feature type="transmembrane region" description="Helical" evidence="2">
    <location>
        <begin position="33"/>
        <end position="53"/>
    </location>
</feature>
<feature type="transmembrane region" description="Helical" evidence="2">
    <location>
        <begin position="77"/>
        <end position="98"/>
    </location>
</feature>
<feature type="transmembrane region" description="Helical" evidence="2">
    <location>
        <begin position="113"/>
        <end position="133"/>
    </location>
</feature>
<feature type="transmembrane region" description="Helical" evidence="2">
    <location>
        <begin position="178"/>
        <end position="198"/>
    </location>
</feature>
<feature type="transmembrane region" description="Helical" evidence="2">
    <location>
        <begin position="226"/>
        <end position="246"/>
    </location>
</feature>
<feature type="transmembrane region" description="Helical" evidence="2">
    <location>
        <begin position="288"/>
        <end position="308"/>
    </location>
</feature>
<feature type="transmembrane region" description="Helical" evidence="2">
    <location>
        <begin position="320"/>
        <end position="340"/>
    </location>
</feature>
<feature type="transmembrane region" description="Helical" evidence="2">
    <location>
        <begin position="347"/>
        <end position="367"/>
    </location>
</feature>
<feature type="binding site" description="axial binding residue" evidence="2">
    <location>
        <position position="83"/>
    </location>
    <ligand>
        <name>heme b</name>
        <dbReference type="ChEBI" id="CHEBI:60344"/>
        <label>b562</label>
    </ligand>
    <ligandPart>
        <name>Fe</name>
        <dbReference type="ChEBI" id="CHEBI:18248"/>
    </ligandPart>
</feature>
<feature type="binding site" description="axial binding residue" evidence="2">
    <location>
        <position position="97"/>
    </location>
    <ligand>
        <name>heme b</name>
        <dbReference type="ChEBI" id="CHEBI:60344"/>
        <label>b566</label>
    </ligand>
    <ligandPart>
        <name>Fe</name>
        <dbReference type="ChEBI" id="CHEBI:18248"/>
    </ligandPart>
</feature>
<feature type="binding site" description="axial binding residue" evidence="2">
    <location>
        <position position="182"/>
    </location>
    <ligand>
        <name>heme b</name>
        <dbReference type="ChEBI" id="CHEBI:60344"/>
        <label>b562</label>
    </ligand>
    <ligandPart>
        <name>Fe</name>
        <dbReference type="ChEBI" id="CHEBI:18248"/>
    </ligandPart>
</feature>
<feature type="binding site" description="axial binding residue" evidence="2">
    <location>
        <position position="196"/>
    </location>
    <ligand>
        <name>heme b</name>
        <dbReference type="ChEBI" id="CHEBI:60344"/>
        <label>b566</label>
    </ligand>
    <ligandPart>
        <name>Fe</name>
        <dbReference type="ChEBI" id="CHEBI:18248"/>
    </ligandPart>
</feature>
<feature type="binding site" evidence="2">
    <location>
        <position position="201"/>
    </location>
    <ligand>
        <name>a ubiquinone</name>
        <dbReference type="ChEBI" id="CHEBI:16389"/>
    </ligand>
</feature>